<comment type="function">
    <text evidence="3">As part of the central apparatus of the cilium axoneme may play a role in cilium movement and thereby cell motility.</text>
</comment>
<comment type="subunit">
    <text evidence="3">Part of the PDCP1 complex composed of CFAP46, CFAP54, CFAP74 and CFAP221; the PDCP1 complex binds calmodulin.</text>
</comment>
<comment type="subcellular location">
    <subcellularLocation>
        <location evidence="3">Cytoplasm</location>
        <location evidence="3">Cytoskeleton</location>
        <location evidence="3">Cilium axoneme</location>
    </subcellularLocation>
</comment>
<comment type="similarity">
    <text evidence="5">Belongs to the CFAP74 family.</text>
</comment>
<comment type="sequence caution" evidence="5">
    <conflict type="erroneous gene model prediction">
        <sequence resource="EMBL-CDS" id="EDP08468"/>
    </conflict>
</comment>
<accession>D4P3R7</accession>
<accession>A8HVZ2</accession>
<protein>
    <recommendedName>
        <fullName evidence="5">Cilia- and flagella-associated protein 74</fullName>
    </recommendedName>
    <alternativeName>
        <fullName evidence="4">Flagella-associated protein 74</fullName>
    </alternativeName>
</protein>
<organism>
    <name type="scientific">Chlamydomonas reinhardtii</name>
    <name type="common">Chlamydomonas smithii</name>
    <dbReference type="NCBI Taxonomy" id="3055"/>
    <lineage>
        <taxon>Eukaryota</taxon>
        <taxon>Viridiplantae</taxon>
        <taxon>Chlorophyta</taxon>
        <taxon>core chlorophytes</taxon>
        <taxon>Chlorophyceae</taxon>
        <taxon>CS clade</taxon>
        <taxon>Chlamydomonadales</taxon>
        <taxon>Chlamydomonadaceae</taxon>
        <taxon>Chlamydomonas</taxon>
    </lineage>
</organism>
<name>CFA74_CHLRE</name>
<sequence length="1940" mass="203808">MALTAEEAYLEELWREEDEQSEEATAMQQMLAHQHEQQHDALPSYQELMGQGSPAVTLRRAKAAAAANGTSSPGIRGSPSPARGPGGRLPSLAMGPTVGANVEQLKRRLQTVVAEVEGHQQRYDKVLLEANKATDLVHSMEAEIESLYVEAEELARRVPPAAERQRQVATWLAQRSAALEAQRQVLGGKQLELIEAEAALRAAETELDFMAEARNEIAAAQAAETAALSAAAATLRGKEDKAVAGYRRKQAAEAARLADVAAAAEDLAQRRIQAAEEAQAQAMERLKANTERIREGIASGRDLLAAEQSRRREAVLGLKESLAAVQADVAQQAELARVLQRQRRDLQEKEFGALVEAGMNPYEVFRRRDQEAAAARQHEAITSNIATRQLEVAAQLAREQEAYAQKLAARKREKKTREIFDREMGPAAQQARTEAYMQAHTVGGVSMLDPTGRVQPFPSEAVVVKTRRFGRGGAPEEVLQQQLQRLGDDTQPKQLLLPAKYRNTADTDAAAVAGLGRGGGSDDEDGMGSPPRSPSLTQQLAATQQSLTATASLAQQQQQAAGDRYKQLATRALTKHEQGLMEAAKTRHKGGIGAPQTQMGRTFGGDAFLPSPAVVEFKDFDVGRTVSASVQIINRSYKKNTFRVTGIPVEYCDVLDFAYKLPGYLAPGVSGEVVISFTPKAPVDIDTSLQLLADTGPFEVPIRCRTKRAALSVSPSAVDFGAGVTLGECATRTFTIANDGALEVEFRLDSPQLSEDERALLKSTANMAHLMTSATVAAAAAAAAATASGQGPRSARSFANMGVADGAAPETDTGPLVAPREERRLAHGGFTVFPCVGHLKGYSKVTFTVTFAPVVAAPAKLLLHASYKAPAMKRLALPHHEVTLTGTGRDVPVYVERPLIDFQCCMLGHLYRDVLVVRNGGKSAMKVMVVPRPELEGFFEFSPDFGFVQAGDSFPITIRFKPTPALLHACRKHVVEPEEEQILEIGMRLSVPDQSLPVPFTLRAQITNTDLLFQPPALDFGDCVMGERTAVKLLVRNPGRLPQTFGFVGLPSGLHFTPNDGFGYVLPGEALERLVSFQPPIAGPQTFSITAKTLAGRSFTLPCRANGVAPPVVLSSNRVRMPATPIGDTRTVSVVLINKTDQPQSYEFAVPADSDLTLSPHVGRVPPQSRLRVQIDYSPRPPVDGEQQGALPPPSAPNTARGPRDGGGGGAMANGNGSGGYEHYNDDGEPEDGEGDADGHTDTDSFQSPSARASPVQPLGRGGRGGRGGAAGEDEDEDEDAGELPVRGKSSSSSKASSGRRSSSPQLGGRQGLAMGRINEVPDDDDADAEAEAAAEAEQRTALAALKRIQSMGGGDPGWYRWREHAITCYIKPQSQNPTPSQSQSGQAPAASAPSDGASGAAAAAETAASSGPAAAPPPQEIHLQVATCAVLPDLVLLAPPDLPYVPLHQCHCLDFGPVPVGQRVVRRLELANEGEEPLVLGAESMDSREVFGLVNALRPVRPGASFRVMVSFTPQARTEYLEVLVLKSARTRLRLALKGAGIAPELQLGPEGVTATGLDMGDVLVGEAAARTLTVTNVCPFPLSFTMRLAGKASAADPNPTMRQAFSCHPAEGTLAQGESCEVAVSFTPFSQRPYFEDVLQVVVPNQQDQLLVPLRGRGWREAVFVAGPDYPEPQPDPFLLHHLAKQAGVALPPSVSGGGAAAGGAAVAAAAAGDKPSTPAPGIKPPATPPGGASKGKAAAAAAAAAAAAAAGASEPRELTLNFPHAIYPGEVATASFDVGSLKSTASGSAPGEVGVAELPAEAREAGWAVTDPPTAGAGGGGKVPLAAGERKPITLSYSAPAAPHPGMVAAYGHAEYRVLKLQLTLKGGLAALSGGPEGRKVVVAARCRLLPGSRPPGEPVPPGVTPAPEPVAASGPGAGAAGVKKLVPPPSPPKKAV</sequence>
<gene>
    <name evidence="5" type="primary">CFAP74</name>
    <name evidence="4" type="synonym">FAP74</name>
    <name evidence="6" type="ORF">CHLREDRAFT_167096</name>
</gene>
<keyword id="KW-0002">3D-structure</keyword>
<keyword id="KW-0966">Cell projection</keyword>
<keyword id="KW-0969">Cilium</keyword>
<keyword id="KW-0175">Coiled coil</keyword>
<keyword id="KW-0963">Cytoplasm</keyword>
<keyword id="KW-0206">Cytoskeleton</keyword>
<dbReference type="EMBL" id="GU564504">
    <property type="protein sequence ID" value="ADD85930.1"/>
    <property type="molecule type" value="mRNA"/>
</dbReference>
<dbReference type="EMBL" id="DS496110">
    <property type="protein sequence ID" value="EDP08468.1"/>
    <property type="status" value="ALT_SEQ"/>
    <property type="molecule type" value="Genomic_DNA"/>
</dbReference>
<dbReference type="PDB" id="7N6G">
    <property type="method" value="EM"/>
    <property type="resolution" value="3.60 A"/>
    <property type="chains" value="3H/3I=1-1940"/>
</dbReference>
<dbReference type="PDB" id="7SQC">
    <property type="method" value="EM"/>
    <property type="resolution" value="3.80 A"/>
    <property type="chains" value="O0/O1/O2=1-1940"/>
</dbReference>
<dbReference type="PDBsum" id="7N6G"/>
<dbReference type="PDBsum" id="7SQC"/>
<dbReference type="EMDB" id="EMD-24207"/>
<dbReference type="EMDB" id="EMD-25381"/>
<dbReference type="SMR" id="D4P3R7"/>
<dbReference type="EnsemblPlants" id="PNW82036">
    <property type="protein sequence ID" value="PNW82036"/>
    <property type="gene ID" value="CHLRE_06g271150v5"/>
</dbReference>
<dbReference type="Gramene" id="PNW82036">
    <property type="protein sequence ID" value="PNW82036"/>
    <property type="gene ID" value="CHLRE_06g271150v5"/>
</dbReference>
<dbReference type="eggNOG" id="ENOG502QPUP">
    <property type="taxonomic scope" value="Eukaryota"/>
</dbReference>
<dbReference type="OMA" id="RYKQLAT"/>
<dbReference type="OrthoDB" id="545169at2759"/>
<dbReference type="GO" id="GO:1990716">
    <property type="term" value="C:axonemal central apparatus"/>
    <property type="evidence" value="ECO:0000314"/>
    <property type="project" value="UniProtKB"/>
</dbReference>
<dbReference type="GO" id="GO:0005930">
    <property type="term" value="C:axoneme"/>
    <property type="evidence" value="ECO:0000314"/>
    <property type="project" value="UniProtKB"/>
</dbReference>
<dbReference type="GO" id="GO:0035082">
    <property type="term" value="P:axoneme assembly"/>
    <property type="evidence" value="ECO:0000315"/>
    <property type="project" value="UniProtKB"/>
</dbReference>
<dbReference type="GO" id="GO:0060294">
    <property type="term" value="P:cilium movement involved in cell motility"/>
    <property type="evidence" value="ECO:0000315"/>
    <property type="project" value="UniProtKB"/>
</dbReference>
<dbReference type="Gene3D" id="2.60.40.10">
    <property type="entry name" value="Immunoglobulins"/>
    <property type="match status" value="7"/>
</dbReference>
<dbReference type="InterPro" id="IPR056307">
    <property type="entry name" value="Ig-CFAP74_3rd"/>
</dbReference>
<dbReference type="InterPro" id="IPR056310">
    <property type="entry name" value="Ig-CFAP74_4th"/>
</dbReference>
<dbReference type="InterPro" id="IPR013783">
    <property type="entry name" value="Ig-like_fold"/>
</dbReference>
<dbReference type="NCBIfam" id="NF012200">
    <property type="entry name" value="choice_anch_D"/>
    <property type="match status" value="1"/>
</dbReference>
<dbReference type="PANTHER" id="PTHR22538">
    <property type="entry name" value="CILIA- AND FLAGELLA-ASSOCIATED PROTEIN 74"/>
    <property type="match status" value="1"/>
</dbReference>
<dbReference type="PANTHER" id="PTHR22538:SF0">
    <property type="entry name" value="CILIA- AND FLAGELLA-ASSOCIATED PROTEIN 74"/>
    <property type="match status" value="1"/>
</dbReference>
<dbReference type="Pfam" id="PF24778">
    <property type="entry name" value="Ig-CFAP74_3rd"/>
    <property type="match status" value="1"/>
</dbReference>
<dbReference type="Pfam" id="PF24798">
    <property type="entry name" value="Ig-CFAP74_4th"/>
    <property type="match status" value="1"/>
</dbReference>
<dbReference type="Pfam" id="PF24507">
    <property type="entry name" value="Ig_CFAP65_4th"/>
    <property type="match status" value="1"/>
</dbReference>
<dbReference type="Pfam" id="PF24771">
    <property type="entry name" value="Ig_CFAP74_1st"/>
    <property type="match status" value="1"/>
</dbReference>
<evidence type="ECO:0000255" key="1"/>
<evidence type="ECO:0000256" key="2">
    <source>
        <dbReference type="SAM" id="MobiDB-lite"/>
    </source>
</evidence>
<evidence type="ECO:0000269" key="3">
    <source>
    </source>
</evidence>
<evidence type="ECO:0000303" key="4">
    <source>
    </source>
</evidence>
<evidence type="ECO:0000305" key="5"/>
<evidence type="ECO:0000312" key="6">
    <source>
        <dbReference type="EMBL" id="EDP08468.1"/>
    </source>
</evidence>
<proteinExistence type="evidence at protein level"/>
<reference key="1">
    <citation type="journal article" date="2010" name="J. Cell Biol.">
        <title>Pcdp1 is a central apparatus protein that binds Ca2+-calmodulin and regulates ciliary motility.</title>
        <authorList>
            <person name="DiPetrillo C.G."/>
            <person name="Smith E.F."/>
        </authorList>
    </citation>
    <scope>NUCLEOTIDE SEQUENCE [MRNA]</scope>
    <scope>FUNCTION</scope>
    <scope>SUBUNIT</scope>
    <scope>SUBCELLULAR LOCATION</scope>
</reference>
<reference key="2">
    <citation type="journal article" date="2007" name="Science">
        <title>The Chlamydomonas genome reveals the evolution of key animal and plant functions.</title>
        <authorList>
            <person name="Merchant S.S."/>
            <person name="Prochnik S.E."/>
            <person name="Vallon O."/>
            <person name="Harris E.H."/>
            <person name="Karpowicz S.J."/>
            <person name="Witman G.B."/>
            <person name="Terry A."/>
            <person name="Salamov A."/>
            <person name="Fritz-Laylin L.K."/>
            <person name="Marechal-Drouard L."/>
            <person name="Marshall W.F."/>
            <person name="Qu L.H."/>
            <person name="Nelson D.R."/>
            <person name="Sanderfoot A.A."/>
            <person name="Spalding M.H."/>
            <person name="Kapitonov V.V."/>
            <person name="Ren Q."/>
            <person name="Ferris P."/>
            <person name="Lindquist E."/>
            <person name="Shapiro H."/>
            <person name="Lucas S.M."/>
            <person name="Grimwood J."/>
            <person name="Schmutz J."/>
            <person name="Cardol P."/>
            <person name="Cerutti H."/>
            <person name="Chanfreau G."/>
            <person name="Chen C.L."/>
            <person name="Cognat V."/>
            <person name="Croft M.T."/>
            <person name="Dent R."/>
            <person name="Dutcher S."/>
            <person name="Fernandez E."/>
            <person name="Fukuzawa H."/>
            <person name="Gonzalez-Ballester D."/>
            <person name="Gonzalez-Halphen D."/>
            <person name="Hallmann A."/>
            <person name="Hanikenne M."/>
            <person name="Hippler M."/>
            <person name="Inwood W."/>
            <person name="Jabbari K."/>
            <person name="Kalanon M."/>
            <person name="Kuras R."/>
            <person name="Lefebvre P.A."/>
            <person name="Lemaire S.D."/>
            <person name="Lobanov A.V."/>
            <person name="Lohr M."/>
            <person name="Manuell A."/>
            <person name="Meier I."/>
            <person name="Mets L."/>
            <person name="Mittag M."/>
            <person name="Mittelmeier T."/>
            <person name="Moroney J.V."/>
            <person name="Moseley J."/>
            <person name="Napoli C."/>
            <person name="Nedelcu A.M."/>
            <person name="Niyogi K."/>
            <person name="Novoselov S.V."/>
            <person name="Paulsen I.T."/>
            <person name="Pazour G.J."/>
            <person name="Purton S."/>
            <person name="Ral J.P."/>
            <person name="Riano-Pachon D.M."/>
            <person name="Riekhof W."/>
            <person name="Rymarquis L."/>
            <person name="Schroda M."/>
            <person name="Stern D."/>
            <person name="Umen J."/>
            <person name="Willows R."/>
            <person name="Wilson N."/>
            <person name="Zimmer S.L."/>
            <person name="Allmer J."/>
            <person name="Balk J."/>
            <person name="Bisova K."/>
            <person name="Chen C.J."/>
            <person name="Elias M."/>
            <person name="Gendler K."/>
            <person name="Hauser C."/>
            <person name="Lamb M.R."/>
            <person name="Ledford H."/>
            <person name="Long J.C."/>
            <person name="Minagawa J."/>
            <person name="Page M.D."/>
            <person name="Pan J."/>
            <person name="Pootakham W."/>
            <person name="Roje S."/>
            <person name="Rose A."/>
            <person name="Stahlberg E."/>
            <person name="Terauchi A.M."/>
            <person name="Yang P."/>
            <person name="Ball S."/>
            <person name="Bowler C."/>
            <person name="Dieckmann C.L."/>
            <person name="Gladyshev V.N."/>
            <person name="Green P."/>
            <person name="Jorgensen R."/>
            <person name="Mayfield S."/>
            <person name="Mueller-Roeber B."/>
            <person name="Rajamani S."/>
            <person name="Sayre R.T."/>
            <person name="Brokstein P."/>
            <person name="Dubchak I."/>
            <person name="Goodstein D."/>
            <person name="Hornick L."/>
            <person name="Huang Y.W."/>
            <person name="Jhaveri J."/>
            <person name="Luo Y."/>
            <person name="Martinez D."/>
            <person name="Ngau W.C."/>
            <person name="Otillar B."/>
            <person name="Poliakov A."/>
            <person name="Porter A."/>
            <person name="Szajkowski L."/>
            <person name="Werner G."/>
            <person name="Zhou K."/>
            <person name="Grigoriev I.V."/>
            <person name="Rokhsar D.S."/>
            <person name="Grossman A.R."/>
        </authorList>
    </citation>
    <scope>NUCLEOTIDE SEQUENCE [LARGE SCALE GENOMIC DNA]</scope>
    <source>
        <strain>CC-503</strain>
    </source>
</reference>
<feature type="chain" id="PRO_0000431702" description="Cilia- and flagella-associated protein 74">
    <location>
        <begin position="1"/>
        <end position="1940"/>
    </location>
</feature>
<feature type="region of interest" description="Disordered" evidence="2">
    <location>
        <begin position="52"/>
        <end position="90"/>
    </location>
</feature>
<feature type="region of interest" description="Disordered" evidence="2">
    <location>
        <begin position="512"/>
        <end position="548"/>
    </location>
</feature>
<feature type="region of interest" description="Disordered" evidence="2">
    <location>
        <begin position="1159"/>
        <end position="1336"/>
    </location>
</feature>
<feature type="region of interest" description="Disordered" evidence="2">
    <location>
        <begin position="1373"/>
        <end position="1418"/>
    </location>
</feature>
<feature type="region of interest" description="Disordered" evidence="2">
    <location>
        <begin position="1714"/>
        <end position="1737"/>
    </location>
</feature>
<feature type="region of interest" description="Disordered" evidence="2">
    <location>
        <begin position="1894"/>
        <end position="1940"/>
    </location>
</feature>
<feature type="coiled-coil region" evidence="1">
    <location>
        <begin position="100"/>
        <end position="159"/>
    </location>
</feature>
<feature type="compositionally biased region" description="Low complexity" evidence="2">
    <location>
        <begin position="63"/>
        <end position="90"/>
    </location>
</feature>
<feature type="compositionally biased region" description="Low complexity" evidence="2">
    <location>
        <begin position="535"/>
        <end position="548"/>
    </location>
</feature>
<feature type="compositionally biased region" description="Gly residues" evidence="2">
    <location>
        <begin position="1205"/>
        <end position="1220"/>
    </location>
</feature>
<feature type="compositionally biased region" description="Acidic residues" evidence="2">
    <location>
        <begin position="1227"/>
        <end position="1236"/>
    </location>
</feature>
<feature type="compositionally biased region" description="Gly residues" evidence="2">
    <location>
        <begin position="1260"/>
        <end position="1271"/>
    </location>
</feature>
<feature type="compositionally biased region" description="Acidic residues" evidence="2">
    <location>
        <begin position="1272"/>
        <end position="1282"/>
    </location>
</feature>
<feature type="compositionally biased region" description="Low complexity" evidence="2">
    <location>
        <begin position="1287"/>
        <end position="1304"/>
    </location>
</feature>
<feature type="compositionally biased region" description="Acidic residues" evidence="2">
    <location>
        <begin position="1321"/>
        <end position="1335"/>
    </location>
</feature>
<feature type="compositionally biased region" description="Low complexity" evidence="2">
    <location>
        <begin position="1373"/>
        <end position="1414"/>
    </location>
</feature>
<feature type="compositionally biased region" description="Pro residues" evidence="2">
    <location>
        <begin position="1720"/>
        <end position="1731"/>
    </location>
</feature>
<feature type="compositionally biased region" description="Pro residues" evidence="2">
    <location>
        <begin position="1896"/>
        <end position="1912"/>
    </location>
</feature>
<feature type="compositionally biased region" description="Low complexity" evidence="2">
    <location>
        <begin position="1913"/>
        <end position="1929"/>
    </location>
</feature>
<feature type="compositionally biased region" description="Pro residues" evidence="2">
    <location>
        <begin position="1930"/>
        <end position="1940"/>
    </location>
</feature>